<reference key="1">
    <citation type="journal article" date="2004" name="Proc. Natl. Acad. Sci. U.S.A.">
        <title>Genomic plasticity of the causative agent of melioidosis, Burkholderia pseudomallei.</title>
        <authorList>
            <person name="Holden M.T.G."/>
            <person name="Titball R.W."/>
            <person name="Peacock S.J."/>
            <person name="Cerdeno-Tarraga A.-M."/>
            <person name="Atkins T."/>
            <person name="Crossman L.C."/>
            <person name="Pitt T."/>
            <person name="Churcher C."/>
            <person name="Mungall K.L."/>
            <person name="Bentley S.D."/>
            <person name="Sebaihia M."/>
            <person name="Thomson N.R."/>
            <person name="Bason N."/>
            <person name="Beacham I.R."/>
            <person name="Brooks K."/>
            <person name="Brown K.A."/>
            <person name="Brown N.F."/>
            <person name="Challis G.L."/>
            <person name="Cherevach I."/>
            <person name="Chillingworth T."/>
            <person name="Cronin A."/>
            <person name="Crossett B."/>
            <person name="Davis P."/>
            <person name="DeShazer D."/>
            <person name="Feltwell T."/>
            <person name="Fraser A."/>
            <person name="Hance Z."/>
            <person name="Hauser H."/>
            <person name="Holroyd S."/>
            <person name="Jagels K."/>
            <person name="Keith K.E."/>
            <person name="Maddison M."/>
            <person name="Moule S."/>
            <person name="Price C."/>
            <person name="Quail M.A."/>
            <person name="Rabbinowitsch E."/>
            <person name="Rutherford K."/>
            <person name="Sanders M."/>
            <person name="Simmonds M."/>
            <person name="Songsivilai S."/>
            <person name="Stevens K."/>
            <person name="Tumapa S."/>
            <person name="Vesaratchavest M."/>
            <person name="Whitehead S."/>
            <person name="Yeats C."/>
            <person name="Barrell B.G."/>
            <person name="Oyston P.C.F."/>
            <person name="Parkhill J."/>
        </authorList>
    </citation>
    <scope>NUCLEOTIDE SEQUENCE [LARGE SCALE GENOMIC DNA]</scope>
    <source>
        <strain>K96243</strain>
    </source>
</reference>
<proteinExistence type="inferred from homology"/>
<keyword id="KW-1003">Cell membrane</keyword>
<keyword id="KW-0285">Flavoprotein</keyword>
<keyword id="KW-0288">FMN</keyword>
<keyword id="KW-0472">Membrane</keyword>
<keyword id="KW-0560">Oxidoreductase</keyword>
<keyword id="KW-0665">Pyrimidine biosynthesis</keyword>
<keyword id="KW-1185">Reference proteome</keyword>
<dbReference type="EC" id="1.3.5.2" evidence="1"/>
<dbReference type="EMBL" id="BX571965">
    <property type="protein sequence ID" value="CAH35865.1"/>
    <property type="molecule type" value="Genomic_DNA"/>
</dbReference>
<dbReference type="RefSeq" id="WP_004534868.1">
    <property type="nucleotide sequence ID" value="NZ_CP009538.1"/>
</dbReference>
<dbReference type="RefSeq" id="YP_108465.1">
    <property type="nucleotide sequence ID" value="NC_006350.1"/>
</dbReference>
<dbReference type="SMR" id="Q63TV1"/>
<dbReference type="STRING" id="272560.BPSL1866"/>
<dbReference type="KEGG" id="bps:BPSL1866"/>
<dbReference type="PATRIC" id="fig|272560.51.peg.4000"/>
<dbReference type="eggNOG" id="COG0167">
    <property type="taxonomic scope" value="Bacteria"/>
</dbReference>
<dbReference type="UniPathway" id="UPA00070">
    <property type="reaction ID" value="UER00946"/>
</dbReference>
<dbReference type="Proteomes" id="UP000000605">
    <property type="component" value="Chromosome 1"/>
</dbReference>
<dbReference type="GO" id="GO:0005737">
    <property type="term" value="C:cytoplasm"/>
    <property type="evidence" value="ECO:0007669"/>
    <property type="project" value="InterPro"/>
</dbReference>
<dbReference type="GO" id="GO:0005886">
    <property type="term" value="C:plasma membrane"/>
    <property type="evidence" value="ECO:0007669"/>
    <property type="project" value="UniProtKB-SubCell"/>
</dbReference>
<dbReference type="GO" id="GO:0106430">
    <property type="term" value="F:dihydroorotate dehydrogenase (quinone) activity"/>
    <property type="evidence" value="ECO:0007669"/>
    <property type="project" value="UniProtKB-EC"/>
</dbReference>
<dbReference type="GO" id="GO:0006207">
    <property type="term" value="P:'de novo' pyrimidine nucleobase biosynthetic process"/>
    <property type="evidence" value="ECO:0007669"/>
    <property type="project" value="InterPro"/>
</dbReference>
<dbReference type="GO" id="GO:0044205">
    <property type="term" value="P:'de novo' UMP biosynthetic process"/>
    <property type="evidence" value="ECO:0007669"/>
    <property type="project" value="UniProtKB-UniRule"/>
</dbReference>
<dbReference type="CDD" id="cd04738">
    <property type="entry name" value="DHOD_2_like"/>
    <property type="match status" value="1"/>
</dbReference>
<dbReference type="FunFam" id="3.20.20.70:FF:000028">
    <property type="entry name" value="Dihydroorotate dehydrogenase (quinone)"/>
    <property type="match status" value="1"/>
</dbReference>
<dbReference type="Gene3D" id="3.20.20.70">
    <property type="entry name" value="Aldolase class I"/>
    <property type="match status" value="1"/>
</dbReference>
<dbReference type="HAMAP" id="MF_00225">
    <property type="entry name" value="DHO_dh_type2"/>
    <property type="match status" value="1"/>
</dbReference>
<dbReference type="InterPro" id="IPR013785">
    <property type="entry name" value="Aldolase_TIM"/>
</dbReference>
<dbReference type="InterPro" id="IPR050074">
    <property type="entry name" value="DHO_dehydrogenase"/>
</dbReference>
<dbReference type="InterPro" id="IPR012135">
    <property type="entry name" value="Dihydroorotate_DH_1_2"/>
</dbReference>
<dbReference type="InterPro" id="IPR005719">
    <property type="entry name" value="Dihydroorotate_DH_2"/>
</dbReference>
<dbReference type="InterPro" id="IPR005720">
    <property type="entry name" value="Dihydroorotate_DH_cat"/>
</dbReference>
<dbReference type="InterPro" id="IPR001295">
    <property type="entry name" value="Dihydroorotate_DH_CS"/>
</dbReference>
<dbReference type="NCBIfam" id="NF003644">
    <property type="entry name" value="PRK05286.1-1"/>
    <property type="match status" value="1"/>
</dbReference>
<dbReference type="NCBIfam" id="NF003645">
    <property type="entry name" value="PRK05286.1-2"/>
    <property type="match status" value="1"/>
</dbReference>
<dbReference type="NCBIfam" id="NF003646">
    <property type="entry name" value="PRK05286.1-4"/>
    <property type="match status" value="1"/>
</dbReference>
<dbReference type="NCBIfam" id="NF003652">
    <property type="entry name" value="PRK05286.2-5"/>
    <property type="match status" value="1"/>
</dbReference>
<dbReference type="NCBIfam" id="TIGR01036">
    <property type="entry name" value="pyrD_sub2"/>
    <property type="match status" value="1"/>
</dbReference>
<dbReference type="PANTHER" id="PTHR48109:SF4">
    <property type="entry name" value="DIHYDROOROTATE DEHYDROGENASE (QUINONE), MITOCHONDRIAL"/>
    <property type="match status" value="1"/>
</dbReference>
<dbReference type="PANTHER" id="PTHR48109">
    <property type="entry name" value="DIHYDROOROTATE DEHYDROGENASE (QUINONE), MITOCHONDRIAL-RELATED"/>
    <property type="match status" value="1"/>
</dbReference>
<dbReference type="Pfam" id="PF01180">
    <property type="entry name" value="DHO_dh"/>
    <property type="match status" value="1"/>
</dbReference>
<dbReference type="PIRSF" id="PIRSF000164">
    <property type="entry name" value="DHO_oxidase"/>
    <property type="match status" value="1"/>
</dbReference>
<dbReference type="SUPFAM" id="SSF51395">
    <property type="entry name" value="FMN-linked oxidoreductases"/>
    <property type="match status" value="1"/>
</dbReference>
<dbReference type="PROSITE" id="PS00911">
    <property type="entry name" value="DHODEHASE_1"/>
    <property type="match status" value="1"/>
</dbReference>
<dbReference type="PROSITE" id="PS00912">
    <property type="entry name" value="DHODEHASE_2"/>
    <property type="match status" value="1"/>
</dbReference>
<comment type="function">
    <text evidence="1">Catalyzes the conversion of dihydroorotate to orotate with quinone as electron acceptor.</text>
</comment>
<comment type="catalytic activity">
    <reaction evidence="1">
        <text>(S)-dihydroorotate + a quinone = orotate + a quinol</text>
        <dbReference type="Rhea" id="RHEA:30187"/>
        <dbReference type="ChEBI" id="CHEBI:24646"/>
        <dbReference type="ChEBI" id="CHEBI:30839"/>
        <dbReference type="ChEBI" id="CHEBI:30864"/>
        <dbReference type="ChEBI" id="CHEBI:132124"/>
        <dbReference type="EC" id="1.3.5.2"/>
    </reaction>
</comment>
<comment type="cofactor">
    <cofactor evidence="1">
        <name>FMN</name>
        <dbReference type="ChEBI" id="CHEBI:58210"/>
    </cofactor>
    <text evidence="1">Binds 1 FMN per subunit.</text>
</comment>
<comment type="pathway">
    <text evidence="1">Pyrimidine metabolism; UMP biosynthesis via de novo pathway; orotate from (S)-dihydroorotate (quinone route): step 1/1.</text>
</comment>
<comment type="subunit">
    <text evidence="1">Monomer.</text>
</comment>
<comment type="subcellular location">
    <subcellularLocation>
        <location evidence="1">Cell membrane</location>
        <topology evidence="1">Peripheral membrane protein</topology>
    </subcellularLocation>
</comment>
<comment type="similarity">
    <text evidence="1">Belongs to the dihydroorotate dehydrogenase family. Type 2 subfamily.</text>
</comment>
<gene>
    <name evidence="1" type="primary">pyrD</name>
    <name type="ordered locus">BPSL1866</name>
</gene>
<protein>
    <recommendedName>
        <fullName evidence="1">Dihydroorotate dehydrogenase (quinone)</fullName>
        <ecNumber evidence="1">1.3.5.2</ecNumber>
    </recommendedName>
    <alternativeName>
        <fullName evidence="1">DHOdehase</fullName>
        <shortName evidence="1">DHOD</shortName>
        <shortName evidence="1">DHODase</shortName>
    </alternativeName>
    <alternativeName>
        <fullName evidence="1">Dihydroorotate oxidase</fullName>
    </alternativeName>
</protein>
<name>PYRD_BURPS</name>
<accession>Q63TV1</accession>
<organism>
    <name type="scientific">Burkholderia pseudomallei (strain K96243)</name>
    <dbReference type="NCBI Taxonomy" id="272560"/>
    <lineage>
        <taxon>Bacteria</taxon>
        <taxon>Pseudomonadati</taxon>
        <taxon>Pseudomonadota</taxon>
        <taxon>Betaproteobacteria</taxon>
        <taxon>Burkholderiales</taxon>
        <taxon>Burkholderiaceae</taxon>
        <taxon>Burkholderia</taxon>
        <taxon>pseudomallei group</taxon>
    </lineage>
</organism>
<feature type="chain" id="PRO_0000148429" description="Dihydroorotate dehydrogenase (quinone)">
    <location>
        <begin position="1"/>
        <end position="342"/>
    </location>
</feature>
<feature type="active site" description="Nucleophile" evidence="1">
    <location>
        <position position="178"/>
    </location>
</feature>
<feature type="binding site" evidence="1">
    <location>
        <begin position="65"/>
        <end position="69"/>
    </location>
    <ligand>
        <name>FMN</name>
        <dbReference type="ChEBI" id="CHEBI:58210"/>
    </ligand>
</feature>
<feature type="binding site" evidence="1">
    <location>
        <position position="69"/>
    </location>
    <ligand>
        <name>substrate</name>
    </ligand>
</feature>
<feature type="binding site" evidence="1">
    <location>
        <position position="89"/>
    </location>
    <ligand>
        <name>FMN</name>
        <dbReference type="ChEBI" id="CHEBI:58210"/>
    </ligand>
</feature>
<feature type="binding site" evidence="1">
    <location>
        <begin position="114"/>
        <end position="118"/>
    </location>
    <ligand>
        <name>substrate</name>
    </ligand>
</feature>
<feature type="binding site" evidence="1">
    <location>
        <position position="142"/>
    </location>
    <ligand>
        <name>FMN</name>
        <dbReference type="ChEBI" id="CHEBI:58210"/>
    </ligand>
</feature>
<feature type="binding site" evidence="1">
    <location>
        <position position="175"/>
    </location>
    <ligand>
        <name>FMN</name>
        <dbReference type="ChEBI" id="CHEBI:58210"/>
    </ligand>
</feature>
<feature type="binding site" evidence="1">
    <location>
        <position position="175"/>
    </location>
    <ligand>
        <name>substrate</name>
    </ligand>
</feature>
<feature type="binding site" evidence="1">
    <location>
        <position position="180"/>
    </location>
    <ligand>
        <name>substrate</name>
    </ligand>
</feature>
<feature type="binding site" evidence="1">
    <location>
        <position position="220"/>
    </location>
    <ligand>
        <name>FMN</name>
        <dbReference type="ChEBI" id="CHEBI:58210"/>
    </ligand>
</feature>
<feature type="binding site" evidence="1">
    <location>
        <position position="248"/>
    </location>
    <ligand>
        <name>FMN</name>
        <dbReference type="ChEBI" id="CHEBI:58210"/>
    </ligand>
</feature>
<feature type="binding site" evidence="1">
    <location>
        <begin position="249"/>
        <end position="250"/>
    </location>
    <ligand>
        <name>substrate</name>
    </ligand>
</feature>
<feature type="binding site" evidence="1">
    <location>
        <position position="271"/>
    </location>
    <ligand>
        <name>FMN</name>
        <dbReference type="ChEBI" id="CHEBI:58210"/>
    </ligand>
</feature>
<feature type="binding site" evidence="1">
    <location>
        <position position="300"/>
    </location>
    <ligand>
        <name>FMN</name>
        <dbReference type="ChEBI" id="CHEBI:58210"/>
    </ligand>
</feature>
<feature type="binding site" evidence="1">
    <location>
        <begin position="321"/>
        <end position="322"/>
    </location>
    <ligand>
        <name>FMN</name>
        <dbReference type="ChEBI" id="CHEBI:58210"/>
    </ligand>
</feature>
<evidence type="ECO:0000255" key="1">
    <source>
        <dbReference type="HAMAP-Rule" id="MF_00225"/>
    </source>
</evidence>
<sequence>MFSSLYPLARASLFKMDAEDAHHLTLRMLGAAGRTGLACALSPRVPDAPRTVMGLSFRNPVGLAAGLDKDGAAIDGFAALGFGFIEVGTVTPRAQPGNPRPRMFRLPEADAIINRMGFNNSGVDQFVKNVQAARYRGVLGLNIGKNADTPIERAADDYLYCLERVYPFASYVTINISSPNTKNLRQLQGAGELDALLAALKDKQRRLADLHGKLVPLALKIAPDLDDEQVKEIAATLLRHDIEGVIATNTTLSREAVKGLPHADEAGGLSGRPVFDASNAVIRKLRAELGDAVPIIGVGGIFSGEDARAKLAAGAALVQLYTGFIYRGPALVAECVKAIARG</sequence>